<name>FLIR_BUCAI</name>
<proteinExistence type="inferred from homology"/>
<gene>
    <name type="primary">fliR</name>
    <name type="ordered locus">BU084</name>
</gene>
<comment type="function">
    <text evidence="1">Role in flagellar biosynthesis.</text>
</comment>
<comment type="subcellular location">
    <subcellularLocation>
        <location evidence="3">Cell membrane</location>
        <topology evidence="3">Multi-pass membrane protein</topology>
    </subcellularLocation>
    <subcellularLocation>
        <location evidence="1">Bacterial flagellum basal body</location>
    </subcellularLocation>
</comment>
<comment type="similarity">
    <text evidence="3">Belongs to the FliR/MopE/SpaR family.</text>
</comment>
<organism>
    <name type="scientific">Buchnera aphidicola subsp. Acyrthosiphon pisum (strain APS)</name>
    <name type="common">Acyrthosiphon pisum symbiotic bacterium</name>
    <dbReference type="NCBI Taxonomy" id="107806"/>
    <lineage>
        <taxon>Bacteria</taxon>
        <taxon>Pseudomonadati</taxon>
        <taxon>Pseudomonadota</taxon>
        <taxon>Gammaproteobacteria</taxon>
        <taxon>Enterobacterales</taxon>
        <taxon>Erwiniaceae</taxon>
        <taxon>Buchnera</taxon>
    </lineage>
</organism>
<accession>P57186</accession>
<evidence type="ECO:0000250" key="1"/>
<evidence type="ECO:0000255" key="2"/>
<evidence type="ECO:0000305" key="3"/>
<dbReference type="EMBL" id="BA000003">
    <property type="protein sequence ID" value="BAB12804.1"/>
    <property type="molecule type" value="Genomic_DNA"/>
</dbReference>
<dbReference type="RefSeq" id="NP_239918.1">
    <property type="nucleotide sequence ID" value="NC_002528.1"/>
</dbReference>
<dbReference type="RefSeq" id="WP_010895936.1">
    <property type="nucleotide sequence ID" value="NC_002528.1"/>
</dbReference>
<dbReference type="SMR" id="P57186"/>
<dbReference type="STRING" id="563178.BUAP5A_083"/>
<dbReference type="EnsemblBacteria" id="BAB12804">
    <property type="protein sequence ID" value="BAB12804"/>
    <property type="gene ID" value="BAB12804"/>
</dbReference>
<dbReference type="KEGG" id="buc:BU084"/>
<dbReference type="PATRIC" id="fig|107806.10.peg.90"/>
<dbReference type="eggNOG" id="COG1684">
    <property type="taxonomic scope" value="Bacteria"/>
</dbReference>
<dbReference type="HOGENOM" id="CLU_063626_4_1_6"/>
<dbReference type="Proteomes" id="UP000001806">
    <property type="component" value="Chromosome"/>
</dbReference>
<dbReference type="GO" id="GO:0009425">
    <property type="term" value="C:bacterial-type flagellum basal body"/>
    <property type="evidence" value="ECO:0007669"/>
    <property type="project" value="UniProtKB-SubCell"/>
</dbReference>
<dbReference type="GO" id="GO:0005886">
    <property type="term" value="C:plasma membrane"/>
    <property type="evidence" value="ECO:0007669"/>
    <property type="project" value="UniProtKB-SubCell"/>
</dbReference>
<dbReference type="GO" id="GO:0044780">
    <property type="term" value="P:bacterial-type flagellum assembly"/>
    <property type="evidence" value="ECO:0007669"/>
    <property type="project" value="InterPro"/>
</dbReference>
<dbReference type="GO" id="GO:0006605">
    <property type="term" value="P:protein targeting"/>
    <property type="evidence" value="ECO:0007669"/>
    <property type="project" value="InterPro"/>
</dbReference>
<dbReference type="InterPro" id="IPR006303">
    <property type="entry name" value="FliR"/>
</dbReference>
<dbReference type="InterPro" id="IPR002010">
    <property type="entry name" value="T3SS_IM_R"/>
</dbReference>
<dbReference type="NCBIfam" id="TIGR01400">
    <property type="entry name" value="fliR"/>
    <property type="match status" value="1"/>
</dbReference>
<dbReference type="PANTHER" id="PTHR30065">
    <property type="entry name" value="FLAGELLAR BIOSYNTHETIC PROTEIN FLIR"/>
    <property type="match status" value="1"/>
</dbReference>
<dbReference type="PANTHER" id="PTHR30065:SF8">
    <property type="entry name" value="FLAGELLAR BIOSYNTHETIC PROTEIN FLIR"/>
    <property type="match status" value="1"/>
</dbReference>
<dbReference type="Pfam" id="PF01311">
    <property type="entry name" value="Bac_export_1"/>
    <property type="match status" value="1"/>
</dbReference>
<dbReference type="PRINTS" id="PR00953">
    <property type="entry name" value="TYPE3IMRPROT"/>
</dbReference>
<protein>
    <recommendedName>
        <fullName>Flagellar biosynthetic protein FliR</fullName>
    </recommendedName>
</protein>
<reference key="1">
    <citation type="journal article" date="2000" name="Nature">
        <title>Genome sequence of the endocellular bacterial symbiont of aphids Buchnera sp. APS.</title>
        <authorList>
            <person name="Shigenobu S."/>
            <person name="Watanabe H."/>
            <person name="Hattori M."/>
            <person name="Sakaki Y."/>
            <person name="Ishikawa H."/>
        </authorList>
    </citation>
    <scope>NUCLEOTIDE SEQUENCE [LARGE SCALE GENOMIC DNA]</scope>
    <source>
        <strain>APS</strain>
    </source>
</reference>
<sequence>MLTFNSLQLITLISNFFWPMIRVLSFFSVAPIFKEKLINRKSKILLSGMISWLVWPFLPEVHTVLFSYFGFLLILQQILIGIVLGFTAQLLFATINLSGEIIGLQMGLSFATFFNNNSQIGTSIISRFLNILALFVFITLNMHLYLISIVIDSFYSMPIDGYFLNVNIFFILLKFSSSIFLNGLLLVLPIMIILLSISFVMSLLNRLSPQISIFSIGFPLNLILGMLMLYFLIPVMLPFLKKILDDLIFFMNNNLLHI</sequence>
<feature type="chain" id="PRO_0000192051" description="Flagellar biosynthetic protein FliR">
    <location>
        <begin position="1"/>
        <end position="258"/>
    </location>
</feature>
<feature type="transmembrane region" description="Helical" evidence="2">
    <location>
        <begin position="10"/>
        <end position="32"/>
    </location>
</feature>
<feature type="transmembrane region" description="Helical" evidence="2">
    <location>
        <begin position="44"/>
        <end position="66"/>
    </location>
</feature>
<feature type="transmembrane region" description="Helical" evidence="2">
    <location>
        <begin position="71"/>
        <end position="93"/>
    </location>
</feature>
<feature type="transmembrane region" description="Helical" evidence="2">
    <location>
        <begin position="128"/>
        <end position="150"/>
    </location>
</feature>
<feature type="transmembrane region" description="Helical" evidence="2">
    <location>
        <begin position="154"/>
        <end position="172"/>
    </location>
</feature>
<feature type="transmembrane region" description="Helical" evidence="2">
    <location>
        <begin position="179"/>
        <end position="201"/>
    </location>
</feature>
<feature type="transmembrane region" description="Helical" evidence="2">
    <location>
        <begin position="211"/>
        <end position="233"/>
    </location>
</feature>
<keyword id="KW-0975">Bacterial flagellum</keyword>
<keyword id="KW-1003">Cell membrane</keyword>
<keyword id="KW-0472">Membrane</keyword>
<keyword id="KW-1185">Reference proteome</keyword>
<keyword id="KW-0812">Transmembrane</keyword>
<keyword id="KW-1133">Transmembrane helix</keyword>